<evidence type="ECO:0000255" key="1">
    <source>
        <dbReference type="HAMAP-Rule" id="MF_01342"/>
    </source>
</evidence>
<evidence type="ECO:0000305" key="2"/>
<name>RL16_LACLM</name>
<reference key="1">
    <citation type="journal article" date="2007" name="J. Bacteriol.">
        <title>The complete genome sequence of the lactic acid bacterial paradigm Lactococcus lactis subsp. cremoris MG1363.</title>
        <authorList>
            <person name="Wegmann U."/>
            <person name="O'Connell-Motherway M."/>
            <person name="Zomer A."/>
            <person name="Buist G."/>
            <person name="Shearman C."/>
            <person name="Canchaya C."/>
            <person name="Ventura M."/>
            <person name="Goesmann A."/>
            <person name="Gasson M.J."/>
            <person name="Kuipers O.P."/>
            <person name="van Sinderen D."/>
            <person name="Kok J."/>
        </authorList>
    </citation>
    <scope>NUCLEOTIDE SEQUENCE [LARGE SCALE GENOMIC DNA]</scope>
    <source>
        <strain>MG1363</strain>
    </source>
</reference>
<protein>
    <recommendedName>
        <fullName evidence="1">Large ribosomal subunit protein uL16</fullName>
    </recommendedName>
    <alternativeName>
        <fullName evidence="2">50S ribosomal protein L16</fullName>
    </alternativeName>
</protein>
<sequence>MLVPKRVKHRREFRGKMRGYAKGGDTVSFGEYGLQATTSHWITNRQIEAARIAMTRYMKRNGQVWIKIFPHKSYTAKAIGVRMGSGKGAPEGWVAPVKRGVVMFELGGVDEATAREALRLASHKLPVKTKFVKRGEA</sequence>
<dbReference type="EMBL" id="AM406671">
    <property type="protein sequence ID" value="CAL98939.1"/>
    <property type="molecule type" value="Genomic_DNA"/>
</dbReference>
<dbReference type="RefSeq" id="WP_011677158.1">
    <property type="nucleotide sequence ID" value="NC_009004.1"/>
</dbReference>
<dbReference type="PDB" id="5MYJ">
    <property type="method" value="EM"/>
    <property type="resolution" value="5.60 A"/>
    <property type="chains" value="BP=1-137"/>
</dbReference>
<dbReference type="PDBsum" id="5MYJ"/>
<dbReference type="EMDB" id="EMD-3581"/>
<dbReference type="SMR" id="A2RNP8"/>
<dbReference type="STRING" id="416870.llmg_2376"/>
<dbReference type="GeneID" id="61110420"/>
<dbReference type="KEGG" id="llm:llmg_2376"/>
<dbReference type="eggNOG" id="COG0197">
    <property type="taxonomic scope" value="Bacteria"/>
</dbReference>
<dbReference type="HOGENOM" id="CLU_078858_2_1_9"/>
<dbReference type="OrthoDB" id="9802589at2"/>
<dbReference type="PhylomeDB" id="A2RNP8"/>
<dbReference type="Proteomes" id="UP000000364">
    <property type="component" value="Chromosome"/>
</dbReference>
<dbReference type="GO" id="GO:0022625">
    <property type="term" value="C:cytosolic large ribosomal subunit"/>
    <property type="evidence" value="ECO:0007669"/>
    <property type="project" value="TreeGrafter"/>
</dbReference>
<dbReference type="GO" id="GO:0019843">
    <property type="term" value="F:rRNA binding"/>
    <property type="evidence" value="ECO:0007669"/>
    <property type="project" value="UniProtKB-UniRule"/>
</dbReference>
<dbReference type="GO" id="GO:0003735">
    <property type="term" value="F:structural constituent of ribosome"/>
    <property type="evidence" value="ECO:0007669"/>
    <property type="project" value="InterPro"/>
</dbReference>
<dbReference type="GO" id="GO:0000049">
    <property type="term" value="F:tRNA binding"/>
    <property type="evidence" value="ECO:0007669"/>
    <property type="project" value="UniProtKB-KW"/>
</dbReference>
<dbReference type="GO" id="GO:0006412">
    <property type="term" value="P:translation"/>
    <property type="evidence" value="ECO:0007669"/>
    <property type="project" value="UniProtKB-UniRule"/>
</dbReference>
<dbReference type="CDD" id="cd01433">
    <property type="entry name" value="Ribosomal_L16_L10e"/>
    <property type="match status" value="1"/>
</dbReference>
<dbReference type="FunFam" id="3.90.1170.10:FF:000001">
    <property type="entry name" value="50S ribosomal protein L16"/>
    <property type="match status" value="1"/>
</dbReference>
<dbReference type="Gene3D" id="3.90.1170.10">
    <property type="entry name" value="Ribosomal protein L10e/L16"/>
    <property type="match status" value="1"/>
</dbReference>
<dbReference type="HAMAP" id="MF_01342">
    <property type="entry name" value="Ribosomal_uL16"/>
    <property type="match status" value="1"/>
</dbReference>
<dbReference type="InterPro" id="IPR047873">
    <property type="entry name" value="Ribosomal_uL16"/>
</dbReference>
<dbReference type="InterPro" id="IPR000114">
    <property type="entry name" value="Ribosomal_uL16_bact-type"/>
</dbReference>
<dbReference type="InterPro" id="IPR020798">
    <property type="entry name" value="Ribosomal_uL16_CS"/>
</dbReference>
<dbReference type="InterPro" id="IPR016180">
    <property type="entry name" value="Ribosomal_uL16_dom"/>
</dbReference>
<dbReference type="InterPro" id="IPR036920">
    <property type="entry name" value="Ribosomal_uL16_sf"/>
</dbReference>
<dbReference type="NCBIfam" id="TIGR01164">
    <property type="entry name" value="rplP_bact"/>
    <property type="match status" value="1"/>
</dbReference>
<dbReference type="PANTHER" id="PTHR12220">
    <property type="entry name" value="50S/60S RIBOSOMAL PROTEIN L16"/>
    <property type="match status" value="1"/>
</dbReference>
<dbReference type="PANTHER" id="PTHR12220:SF13">
    <property type="entry name" value="LARGE RIBOSOMAL SUBUNIT PROTEIN UL16M"/>
    <property type="match status" value="1"/>
</dbReference>
<dbReference type="Pfam" id="PF00252">
    <property type="entry name" value="Ribosomal_L16"/>
    <property type="match status" value="1"/>
</dbReference>
<dbReference type="PRINTS" id="PR00060">
    <property type="entry name" value="RIBOSOMALL16"/>
</dbReference>
<dbReference type="SUPFAM" id="SSF54686">
    <property type="entry name" value="Ribosomal protein L16p/L10e"/>
    <property type="match status" value="1"/>
</dbReference>
<dbReference type="PROSITE" id="PS00586">
    <property type="entry name" value="RIBOSOMAL_L16_1"/>
    <property type="match status" value="1"/>
</dbReference>
<dbReference type="PROSITE" id="PS00701">
    <property type="entry name" value="RIBOSOMAL_L16_2"/>
    <property type="match status" value="1"/>
</dbReference>
<accession>A2RNP8</accession>
<keyword id="KW-0002">3D-structure</keyword>
<keyword id="KW-0687">Ribonucleoprotein</keyword>
<keyword id="KW-0689">Ribosomal protein</keyword>
<keyword id="KW-0694">RNA-binding</keyword>
<keyword id="KW-0699">rRNA-binding</keyword>
<keyword id="KW-0820">tRNA-binding</keyword>
<gene>
    <name evidence="1" type="primary">rplP</name>
    <name type="ordered locus">llmg_2376</name>
</gene>
<comment type="function">
    <text evidence="1">Binds 23S rRNA and is also seen to make contacts with the A and possibly P site tRNAs.</text>
</comment>
<comment type="subunit">
    <text evidence="1">Part of the 50S ribosomal subunit.</text>
</comment>
<comment type="similarity">
    <text evidence="1">Belongs to the universal ribosomal protein uL16 family.</text>
</comment>
<feature type="chain" id="PRO_1000054642" description="Large ribosomal subunit protein uL16">
    <location>
        <begin position="1"/>
        <end position="137"/>
    </location>
</feature>
<proteinExistence type="evidence at protein level"/>
<organism>
    <name type="scientific">Lactococcus lactis subsp. cremoris (strain MG1363)</name>
    <dbReference type="NCBI Taxonomy" id="416870"/>
    <lineage>
        <taxon>Bacteria</taxon>
        <taxon>Bacillati</taxon>
        <taxon>Bacillota</taxon>
        <taxon>Bacilli</taxon>
        <taxon>Lactobacillales</taxon>
        <taxon>Streptococcaceae</taxon>
        <taxon>Lactococcus</taxon>
        <taxon>Lactococcus cremoris subsp. cremoris</taxon>
    </lineage>
</organism>